<name>RS11_CAMLR</name>
<dbReference type="EMBL" id="CP000932">
    <property type="protein sequence ID" value="ACM63459.1"/>
    <property type="molecule type" value="Genomic_DNA"/>
</dbReference>
<dbReference type="RefSeq" id="WP_012660844.1">
    <property type="nucleotide sequence ID" value="NC_012039.1"/>
</dbReference>
<dbReference type="SMR" id="B9KEH4"/>
<dbReference type="STRING" id="306263.Cla_0093"/>
<dbReference type="GeneID" id="93004189"/>
<dbReference type="KEGG" id="cla:CLA_0093"/>
<dbReference type="eggNOG" id="COG0100">
    <property type="taxonomic scope" value="Bacteria"/>
</dbReference>
<dbReference type="HOGENOM" id="CLU_072439_5_0_7"/>
<dbReference type="Proteomes" id="UP000007727">
    <property type="component" value="Chromosome"/>
</dbReference>
<dbReference type="GO" id="GO:1990904">
    <property type="term" value="C:ribonucleoprotein complex"/>
    <property type="evidence" value="ECO:0007669"/>
    <property type="project" value="UniProtKB-KW"/>
</dbReference>
<dbReference type="GO" id="GO:0005840">
    <property type="term" value="C:ribosome"/>
    <property type="evidence" value="ECO:0007669"/>
    <property type="project" value="UniProtKB-KW"/>
</dbReference>
<dbReference type="GO" id="GO:0019843">
    <property type="term" value="F:rRNA binding"/>
    <property type="evidence" value="ECO:0007669"/>
    <property type="project" value="UniProtKB-UniRule"/>
</dbReference>
<dbReference type="GO" id="GO:0003735">
    <property type="term" value="F:structural constituent of ribosome"/>
    <property type="evidence" value="ECO:0007669"/>
    <property type="project" value="InterPro"/>
</dbReference>
<dbReference type="GO" id="GO:0006412">
    <property type="term" value="P:translation"/>
    <property type="evidence" value="ECO:0007669"/>
    <property type="project" value="UniProtKB-UniRule"/>
</dbReference>
<dbReference type="FunFam" id="3.30.420.80:FF:000001">
    <property type="entry name" value="30S ribosomal protein S11"/>
    <property type="match status" value="1"/>
</dbReference>
<dbReference type="Gene3D" id="3.30.420.80">
    <property type="entry name" value="Ribosomal protein S11"/>
    <property type="match status" value="1"/>
</dbReference>
<dbReference type="HAMAP" id="MF_01310">
    <property type="entry name" value="Ribosomal_uS11"/>
    <property type="match status" value="1"/>
</dbReference>
<dbReference type="InterPro" id="IPR001971">
    <property type="entry name" value="Ribosomal_uS11"/>
</dbReference>
<dbReference type="InterPro" id="IPR019981">
    <property type="entry name" value="Ribosomal_uS11_bac-type"/>
</dbReference>
<dbReference type="InterPro" id="IPR018102">
    <property type="entry name" value="Ribosomal_uS11_CS"/>
</dbReference>
<dbReference type="InterPro" id="IPR036967">
    <property type="entry name" value="Ribosomal_uS11_sf"/>
</dbReference>
<dbReference type="NCBIfam" id="NF003698">
    <property type="entry name" value="PRK05309.1"/>
    <property type="match status" value="1"/>
</dbReference>
<dbReference type="NCBIfam" id="TIGR03632">
    <property type="entry name" value="uS11_bact"/>
    <property type="match status" value="1"/>
</dbReference>
<dbReference type="PANTHER" id="PTHR11759">
    <property type="entry name" value="40S RIBOSOMAL PROTEIN S14/30S RIBOSOMAL PROTEIN S11"/>
    <property type="match status" value="1"/>
</dbReference>
<dbReference type="Pfam" id="PF00411">
    <property type="entry name" value="Ribosomal_S11"/>
    <property type="match status" value="1"/>
</dbReference>
<dbReference type="PIRSF" id="PIRSF002131">
    <property type="entry name" value="Ribosomal_S11"/>
    <property type="match status" value="1"/>
</dbReference>
<dbReference type="SUPFAM" id="SSF53137">
    <property type="entry name" value="Translational machinery components"/>
    <property type="match status" value="1"/>
</dbReference>
<dbReference type="PROSITE" id="PS00054">
    <property type="entry name" value="RIBOSOMAL_S11"/>
    <property type="match status" value="1"/>
</dbReference>
<keyword id="KW-1185">Reference proteome</keyword>
<keyword id="KW-0687">Ribonucleoprotein</keyword>
<keyword id="KW-0689">Ribosomal protein</keyword>
<keyword id="KW-0694">RNA-binding</keyword>
<keyword id="KW-0699">rRNA-binding</keyword>
<evidence type="ECO:0000255" key="1">
    <source>
        <dbReference type="HAMAP-Rule" id="MF_01310"/>
    </source>
</evidence>
<evidence type="ECO:0000305" key="2"/>
<proteinExistence type="inferred from homology"/>
<gene>
    <name evidence="1" type="primary">rpsK</name>
    <name type="ordered locus">Cla_0093</name>
</gene>
<comment type="function">
    <text evidence="1">Located on the platform of the 30S subunit, it bridges several disparate RNA helices of the 16S rRNA. Forms part of the Shine-Dalgarno cleft in the 70S ribosome.</text>
</comment>
<comment type="subunit">
    <text evidence="1">Part of the 30S ribosomal subunit. Interacts with proteins S7 and S18. Binds to IF-3.</text>
</comment>
<comment type="similarity">
    <text evidence="1">Belongs to the universal ribosomal protein uS11 family.</text>
</comment>
<sequence>MAKRKVVKKKVVKKNIAKGIVYISATFNNTMVTVTDEMGNAIAWSSAGGLGFKGSKKSTPYAAQQAVEDALNKAKEHGIKEVGIKVQGPGSGRETAVKSVGAMEGIKVTFLKDITPLAHNGCRPPKRRRV</sequence>
<protein>
    <recommendedName>
        <fullName evidence="1">Small ribosomal subunit protein uS11</fullName>
    </recommendedName>
    <alternativeName>
        <fullName evidence="2">30S ribosomal protein S11</fullName>
    </alternativeName>
</protein>
<organism>
    <name type="scientific">Campylobacter lari (strain RM2100 / D67 / ATCC BAA-1060)</name>
    <dbReference type="NCBI Taxonomy" id="306263"/>
    <lineage>
        <taxon>Bacteria</taxon>
        <taxon>Pseudomonadati</taxon>
        <taxon>Campylobacterota</taxon>
        <taxon>Epsilonproteobacteria</taxon>
        <taxon>Campylobacterales</taxon>
        <taxon>Campylobacteraceae</taxon>
        <taxon>Campylobacter</taxon>
    </lineage>
</organism>
<reference key="1">
    <citation type="journal article" date="2008" name="Foodborne Pathog. Dis.">
        <title>The complete genome sequence and analysis of the human pathogen Campylobacter lari.</title>
        <authorList>
            <person name="Miller W.G."/>
            <person name="Wang G."/>
            <person name="Binnewies T.T."/>
            <person name="Parker C.T."/>
        </authorList>
    </citation>
    <scope>NUCLEOTIDE SEQUENCE [LARGE SCALE GENOMIC DNA]</scope>
    <source>
        <strain>RM2100 / D67 / ATCC BAA-1060</strain>
    </source>
</reference>
<feature type="chain" id="PRO_1000165537" description="Small ribosomal subunit protein uS11">
    <location>
        <begin position="1"/>
        <end position="130"/>
    </location>
</feature>
<accession>B9KEH4</accession>